<keyword id="KW-0963">Cytoplasm</keyword>
<keyword id="KW-0312">Gluconeogenesis</keyword>
<keyword id="KW-0324">Glycolysis</keyword>
<keyword id="KW-0413">Isomerase</keyword>
<keyword id="KW-1185">Reference proteome</keyword>
<gene>
    <name evidence="1" type="primary">tpiA</name>
    <name type="ordered locus">GbCGDNIH1_0826</name>
</gene>
<protein>
    <recommendedName>
        <fullName evidence="1">Triosephosphate isomerase</fullName>
        <shortName evidence="1">TIM</shortName>
        <shortName evidence="1">TPI</shortName>
        <ecNumber evidence="1">5.3.1.1</ecNumber>
    </recommendedName>
    <alternativeName>
        <fullName evidence="1">Triose-phosphate isomerase</fullName>
    </alternativeName>
</protein>
<name>TPIS_GRABC</name>
<sequence length="249" mass="26280">MRQLIAGNWKMNGLRSTSESLLQALRDAAPHALRNCDMLICPPATLIAQAASVLAGSGIEVGAQDCHMARSGAHTGDLSAEMLVEAGAHWVILGHSERRRDHGELSETVREKVIAARQFGLTPIVCVGETEDERASGRETEIVGWQIKGSLPDGFAADSNGVIAYEPVWAIGTGRTATVEDVAMMHAFIREELVRQFGEAGRGVRILYGGSVKPENAASLLRVPEVGGALVGGASLSAQDFLAIAEASA</sequence>
<reference key="1">
    <citation type="journal article" date="2007" name="J. Bacteriol.">
        <title>Genome sequence analysis of the emerging human pathogenic acetic acid bacterium Granulibacter bethesdensis.</title>
        <authorList>
            <person name="Greenberg D.E."/>
            <person name="Porcella S.F."/>
            <person name="Zelazny A.M."/>
            <person name="Virtaneva K."/>
            <person name="Sturdevant D.E."/>
            <person name="Kupko J.J. III"/>
            <person name="Barbian K.D."/>
            <person name="Babar A."/>
            <person name="Dorward D.W."/>
            <person name="Holland S.M."/>
        </authorList>
    </citation>
    <scope>NUCLEOTIDE SEQUENCE [LARGE SCALE GENOMIC DNA]</scope>
    <source>
        <strain>ATCC BAA-1260 / CGDNIH1</strain>
    </source>
</reference>
<proteinExistence type="inferred from homology"/>
<accession>Q0BTX8</accession>
<evidence type="ECO:0000255" key="1">
    <source>
        <dbReference type="HAMAP-Rule" id="MF_00147"/>
    </source>
</evidence>
<dbReference type="EC" id="5.3.1.1" evidence="1"/>
<dbReference type="EMBL" id="CP000394">
    <property type="protein sequence ID" value="ABI61724.1"/>
    <property type="molecule type" value="Genomic_DNA"/>
</dbReference>
<dbReference type="RefSeq" id="WP_011631533.1">
    <property type="nucleotide sequence ID" value="NC_008343.2"/>
</dbReference>
<dbReference type="SMR" id="Q0BTX8"/>
<dbReference type="STRING" id="391165.GbCGDNIH1_0826"/>
<dbReference type="KEGG" id="gbe:GbCGDNIH1_0826"/>
<dbReference type="eggNOG" id="COG0149">
    <property type="taxonomic scope" value="Bacteria"/>
</dbReference>
<dbReference type="HOGENOM" id="CLU_024251_2_1_5"/>
<dbReference type="OrthoDB" id="9809429at2"/>
<dbReference type="UniPathway" id="UPA00109">
    <property type="reaction ID" value="UER00189"/>
</dbReference>
<dbReference type="UniPathway" id="UPA00138"/>
<dbReference type="Proteomes" id="UP000001963">
    <property type="component" value="Chromosome"/>
</dbReference>
<dbReference type="GO" id="GO:0005829">
    <property type="term" value="C:cytosol"/>
    <property type="evidence" value="ECO:0007669"/>
    <property type="project" value="TreeGrafter"/>
</dbReference>
<dbReference type="GO" id="GO:0004807">
    <property type="term" value="F:triose-phosphate isomerase activity"/>
    <property type="evidence" value="ECO:0007669"/>
    <property type="project" value="UniProtKB-UniRule"/>
</dbReference>
<dbReference type="GO" id="GO:0006094">
    <property type="term" value="P:gluconeogenesis"/>
    <property type="evidence" value="ECO:0007669"/>
    <property type="project" value="UniProtKB-UniRule"/>
</dbReference>
<dbReference type="GO" id="GO:0046166">
    <property type="term" value="P:glyceraldehyde-3-phosphate biosynthetic process"/>
    <property type="evidence" value="ECO:0007669"/>
    <property type="project" value="TreeGrafter"/>
</dbReference>
<dbReference type="GO" id="GO:0019563">
    <property type="term" value="P:glycerol catabolic process"/>
    <property type="evidence" value="ECO:0007669"/>
    <property type="project" value="TreeGrafter"/>
</dbReference>
<dbReference type="GO" id="GO:0006096">
    <property type="term" value="P:glycolytic process"/>
    <property type="evidence" value="ECO:0007669"/>
    <property type="project" value="UniProtKB-UniRule"/>
</dbReference>
<dbReference type="CDD" id="cd00311">
    <property type="entry name" value="TIM"/>
    <property type="match status" value="1"/>
</dbReference>
<dbReference type="FunFam" id="3.20.20.70:FF:000016">
    <property type="entry name" value="Triosephosphate isomerase"/>
    <property type="match status" value="1"/>
</dbReference>
<dbReference type="Gene3D" id="3.20.20.70">
    <property type="entry name" value="Aldolase class I"/>
    <property type="match status" value="1"/>
</dbReference>
<dbReference type="HAMAP" id="MF_00147_B">
    <property type="entry name" value="TIM_B"/>
    <property type="match status" value="1"/>
</dbReference>
<dbReference type="InterPro" id="IPR013785">
    <property type="entry name" value="Aldolase_TIM"/>
</dbReference>
<dbReference type="InterPro" id="IPR035990">
    <property type="entry name" value="TIM_sf"/>
</dbReference>
<dbReference type="InterPro" id="IPR022896">
    <property type="entry name" value="TrioseP_Isoase_bac/euk"/>
</dbReference>
<dbReference type="InterPro" id="IPR000652">
    <property type="entry name" value="Triosephosphate_isomerase"/>
</dbReference>
<dbReference type="InterPro" id="IPR020861">
    <property type="entry name" value="Triosephosphate_isomerase_AS"/>
</dbReference>
<dbReference type="NCBIfam" id="TIGR00419">
    <property type="entry name" value="tim"/>
    <property type="match status" value="1"/>
</dbReference>
<dbReference type="PANTHER" id="PTHR21139">
    <property type="entry name" value="TRIOSEPHOSPHATE ISOMERASE"/>
    <property type="match status" value="1"/>
</dbReference>
<dbReference type="PANTHER" id="PTHR21139:SF42">
    <property type="entry name" value="TRIOSEPHOSPHATE ISOMERASE"/>
    <property type="match status" value="1"/>
</dbReference>
<dbReference type="Pfam" id="PF00121">
    <property type="entry name" value="TIM"/>
    <property type="match status" value="1"/>
</dbReference>
<dbReference type="SUPFAM" id="SSF51351">
    <property type="entry name" value="Triosephosphate isomerase (TIM)"/>
    <property type="match status" value="1"/>
</dbReference>
<dbReference type="PROSITE" id="PS00171">
    <property type="entry name" value="TIM_1"/>
    <property type="match status" value="1"/>
</dbReference>
<dbReference type="PROSITE" id="PS51440">
    <property type="entry name" value="TIM_2"/>
    <property type="match status" value="1"/>
</dbReference>
<organism>
    <name type="scientific">Granulibacter bethesdensis (strain ATCC BAA-1260 / CGDNIH1)</name>
    <dbReference type="NCBI Taxonomy" id="391165"/>
    <lineage>
        <taxon>Bacteria</taxon>
        <taxon>Pseudomonadati</taxon>
        <taxon>Pseudomonadota</taxon>
        <taxon>Alphaproteobacteria</taxon>
        <taxon>Acetobacterales</taxon>
        <taxon>Acetobacteraceae</taxon>
        <taxon>Granulibacter</taxon>
    </lineage>
</organism>
<feature type="chain" id="PRO_1000076650" description="Triosephosphate isomerase">
    <location>
        <begin position="1"/>
        <end position="249"/>
    </location>
</feature>
<feature type="active site" description="Electrophile" evidence="1">
    <location>
        <position position="95"/>
    </location>
</feature>
<feature type="active site" description="Proton acceptor" evidence="1">
    <location>
        <position position="166"/>
    </location>
</feature>
<feature type="binding site" evidence="1">
    <location>
        <begin position="8"/>
        <end position="10"/>
    </location>
    <ligand>
        <name>substrate</name>
    </ligand>
</feature>
<feature type="binding site" evidence="1">
    <location>
        <position position="172"/>
    </location>
    <ligand>
        <name>substrate</name>
    </ligand>
</feature>
<feature type="binding site" evidence="1">
    <location>
        <position position="211"/>
    </location>
    <ligand>
        <name>substrate</name>
    </ligand>
</feature>
<feature type="binding site" evidence="1">
    <location>
        <begin position="232"/>
        <end position="233"/>
    </location>
    <ligand>
        <name>substrate</name>
    </ligand>
</feature>
<comment type="function">
    <text evidence="1">Involved in the gluconeogenesis. Catalyzes stereospecifically the conversion of dihydroxyacetone phosphate (DHAP) to D-glyceraldehyde-3-phosphate (G3P).</text>
</comment>
<comment type="catalytic activity">
    <reaction evidence="1">
        <text>D-glyceraldehyde 3-phosphate = dihydroxyacetone phosphate</text>
        <dbReference type="Rhea" id="RHEA:18585"/>
        <dbReference type="ChEBI" id="CHEBI:57642"/>
        <dbReference type="ChEBI" id="CHEBI:59776"/>
        <dbReference type="EC" id="5.3.1.1"/>
    </reaction>
</comment>
<comment type="pathway">
    <text evidence="1">Carbohydrate biosynthesis; gluconeogenesis.</text>
</comment>
<comment type="pathway">
    <text evidence="1">Carbohydrate degradation; glycolysis; D-glyceraldehyde 3-phosphate from glycerone phosphate: step 1/1.</text>
</comment>
<comment type="subunit">
    <text evidence="1">Homodimer.</text>
</comment>
<comment type="subcellular location">
    <subcellularLocation>
        <location evidence="1">Cytoplasm</location>
    </subcellularLocation>
</comment>
<comment type="similarity">
    <text evidence="1">Belongs to the triosephosphate isomerase family.</text>
</comment>